<keyword id="KW-0030">Aminoacyl-tRNA synthetase</keyword>
<keyword id="KW-0067">ATP-binding</keyword>
<keyword id="KW-0963">Cytoplasm</keyword>
<keyword id="KW-0436">Ligase</keyword>
<keyword id="KW-0547">Nucleotide-binding</keyword>
<keyword id="KW-0648">Protein biosynthesis</keyword>
<keyword id="KW-1185">Reference proteome</keyword>
<name>SYS_ECO45</name>
<gene>
    <name evidence="1" type="primary">serS</name>
    <name type="ordered locus">ECS88_0924</name>
</gene>
<evidence type="ECO:0000255" key="1">
    <source>
        <dbReference type="HAMAP-Rule" id="MF_00176"/>
    </source>
</evidence>
<protein>
    <recommendedName>
        <fullName evidence="1">Serine--tRNA ligase</fullName>
        <ecNumber evidence="1">6.1.1.11</ecNumber>
    </recommendedName>
    <alternativeName>
        <fullName evidence="1">Seryl-tRNA synthetase</fullName>
        <shortName evidence="1">SerRS</shortName>
    </alternativeName>
    <alternativeName>
        <fullName evidence="1">Seryl-tRNA(Ser/Sec) synthetase</fullName>
    </alternativeName>
</protein>
<comment type="function">
    <text evidence="1">Catalyzes the attachment of serine to tRNA(Ser). Is also able to aminoacylate tRNA(Sec) with serine, to form the misacylated tRNA L-seryl-tRNA(Sec), which will be further converted into selenocysteinyl-tRNA(Sec).</text>
</comment>
<comment type="catalytic activity">
    <reaction evidence="1">
        <text>tRNA(Ser) + L-serine + ATP = L-seryl-tRNA(Ser) + AMP + diphosphate + H(+)</text>
        <dbReference type="Rhea" id="RHEA:12292"/>
        <dbReference type="Rhea" id="RHEA-COMP:9669"/>
        <dbReference type="Rhea" id="RHEA-COMP:9703"/>
        <dbReference type="ChEBI" id="CHEBI:15378"/>
        <dbReference type="ChEBI" id="CHEBI:30616"/>
        <dbReference type="ChEBI" id="CHEBI:33019"/>
        <dbReference type="ChEBI" id="CHEBI:33384"/>
        <dbReference type="ChEBI" id="CHEBI:78442"/>
        <dbReference type="ChEBI" id="CHEBI:78533"/>
        <dbReference type="ChEBI" id="CHEBI:456215"/>
        <dbReference type="EC" id="6.1.1.11"/>
    </reaction>
</comment>
<comment type="catalytic activity">
    <reaction evidence="1">
        <text>tRNA(Sec) + L-serine + ATP = L-seryl-tRNA(Sec) + AMP + diphosphate + H(+)</text>
        <dbReference type="Rhea" id="RHEA:42580"/>
        <dbReference type="Rhea" id="RHEA-COMP:9742"/>
        <dbReference type="Rhea" id="RHEA-COMP:10128"/>
        <dbReference type="ChEBI" id="CHEBI:15378"/>
        <dbReference type="ChEBI" id="CHEBI:30616"/>
        <dbReference type="ChEBI" id="CHEBI:33019"/>
        <dbReference type="ChEBI" id="CHEBI:33384"/>
        <dbReference type="ChEBI" id="CHEBI:78442"/>
        <dbReference type="ChEBI" id="CHEBI:78533"/>
        <dbReference type="ChEBI" id="CHEBI:456215"/>
        <dbReference type="EC" id="6.1.1.11"/>
    </reaction>
</comment>
<comment type="pathway">
    <text evidence="1">Aminoacyl-tRNA biosynthesis; selenocysteinyl-tRNA(Sec) biosynthesis; L-seryl-tRNA(Sec) from L-serine and tRNA(Sec): step 1/1.</text>
</comment>
<comment type="subunit">
    <text evidence="1">Homodimer. The tRNA molecule binds across the dimer.</text>
</comment>
<comment type="subcellular location">
    <subcellularLocation>
        <location evidence="1">Cytoplasm</location>
    </subcellularLocation>
</comment>
<comment type="domain">
    <text evidence="1">Consists of two distinct domains, a catalytic core and a N-terminal extension that is involved in tRNA binding.</text>
</comment>
<comment type="similarity">
    <text evidence="1">Belongs to the class-II aminoacyl-tRNA synthetase family. Type-1 seryl-tRNA synthetase subfamily.</text>
</comment>
<accession>B7MHK5</accession>
<sequence>MLDPNLLRNEPDAVAEKLARRGFKLDVDKLGALEERRKVLQVKTENLQAERNSRSKSIGQAKARGEDIEPLRLEVNKLGEELDAAKAELDALQAEIRDIALTIPNLPADEVPVGKDENDNVEVSRWGTPREFDFEVRDHVTLGEMHSGLDFAAAVKLTGSRFVVMKGQIARMHRALSQFMLDLHTEQHGYSENYVPYLVNQDTLYGTGQLPKFAGDLFHTRPLEEEADTSNYALIPTAEVPLTNLVRGEIIDEDDLPIKMTAHTPCFRSEAGSYGRDTRGLIRMHQFDKVEMVQIVRPEDSMAALEEMTGHAEKVLQLLGLPYRKIILCTGDMGFGACKTYDLEVWIPAQNTYREISSCSNVWDFQARRMQARCRSKSDKKTRLVHTLNGSGLAVGRTLVAVMENYQQADGRIEVPEVLRPYMNGLEYIG</sequence>
<organism>
    <name type="scientific">Escherichia coli O45:K1 (strain S88 / ExPEC)</name>
    <dbReference type="NCBI Taxonomy" id="585035"/>
    <lineage>
        <taxon>Bacteria</taxon>
        <taxon>Pseudomonadati</taxon>
        <taxon>Pseudomonadota</taxon>
        <taxon>Gammaproteobacteria</taxon>
        <taxon>Enterobacterales</taxon>
        <taxon>Enterobacteriaceae</taxon>
        <taxon>Escherichia</taxon>
    </lineage>
</organism>
<proteinExistence type="inferred from homology"/>
<reference key="1">
    <citation type="journal article" date="2009" name="PLoS Genet.">
        <title>Organised genome dynamics in the Escherichia coli species results in highly diverse adaptive paths.</title>
        <authorList>
            <person name="Touchon M."/>
            <person name="Hoede C."/>
            <person name="Tenaillon O."/>
            <person name="Barbe V."/>
            <person name="Baeriswyl S."/>
            <person name="Bidet P."/>
            <person name="Bingen E."/>
            <person name="Bonacorsi S."/>
            <person name="Bouchier C."/>
            <person name="Bouvet O."/>
            <person name="Calteau A."/>
            <person name="Chiapello H."/>
            <person name="Clermont O."/>
            <person name="Cruveiller S."/>
            <person name="Danchin A."/>
            <person name="Diard M."/>
            <person name="Dossat C."/>
            <person name="Karoui M.E."/>
            <person name="Frapy E."/>
            <person name="Garry L."/>
            <person name="Ghigo J.M."/>
            <person name="Gilles A.M."/>
            <person name="Johnson J."/>
            <person name="Le Bouguenec C."/>
            <person name="Lescat M."/>
            <person name="Mangenot S."/>
            <person name="Martinez-Jehanne V."/>
            <person name="Matic I."/>
            <person name="Nassif X."/>
            <person name="Oztas S."/>
            <person name="Petit M.A."/>
            <person name="Pichon C."/>
            <person name="Rouy Z."/>
            <person name="Ruf C.S."/>
            <person name="Schneider D."/>
            <person name="Tourret J."/>
            <person name="Vacherie B."/>
            <person name="Vallenet D."/>
            <person name="Medigue C."/>
            <person name="Rocha E.P.C."/>
            <person name="Denamur E."/>
        </authorList>
    </citation>
    <scope>NUCLEOTIDE SEQUENCE [LARGE SCALE GENOMIC DNA]</scope>
    <source>
        <strain>S88 / ExPEC</strain>
    </source>
</reference>
<dbReference type="EC" id="6.1.1.11" evidence="1"/>
<dbReference type="EMBL" id="CU928161">
    <property type="protein sequence ID" value="CAR02256.1"/>
    <property type="molecule type" value="Genomic_DNA"/>
</dbReference>
<dbReference type="RefSeq" id="WP_000886683.1">
    <property type="nucleotide sequence ID" value="NC_011742.1"/>
</dbReference>
<dbReference type="SMR" id="B7MHK5"/>
<dbReference type="GeneID" id="93776527"/>
<dbReference type="KEGG" id="ecz:ECS88_0924"/>
<dbReference type="HOGENOM" id="CLU_023797_1_1_6"/>
<dbReference type="UniPathway" id="UPA00906">
    <property type="reaction ID" value="UER00895"/>
</dbReference>
<dbReference type="Proteomes" id="UP000000747">
    <property type="component" value="Chromosome"/>
</dbReference>
<dbReference type="GO" id="GO:0005737">
    <property type="term" value="C:cytoplasm"/>
    <property type="evidence" value="ECO:0007669"/>
    <property type="project" value="UniProtKB-SubCell"/>
</dbReference>
<dbReference type="GO" id="GO:0005524">
    <property type="term" value="F:ATP binding"/>
    <property type="evidence" value="ECO:0007669"/>
    <property type="project" value="UniProtKB-UniRule"/>
</dbReference>
<dbReference type="GO" id="GO:0004828">
    <property type="term" value="F:serine-tRNA ligase activity"/>
    <property type="evidence" value="ECO:0007669"/>
    <property type="project" value="UniProtKB-UniRule"/>
</dbReference>
<dbReference type="GO" id="GO:0016260">
    <property type="term" value="P:selenocysteine biosynthetic process"/>
    <property type="evidence" value="ECO:0007669"/>
    <property type="project" value="UniProtKB-UniRule"/>
</dbReference>
<dbReference type="GO" id="GO:0006434">
    <property type="term" value="P:seryl-tRNA aminoacylation"/>
    <property type="evidence" value="ECO:0007669"/>
    <property type="project" value="UniProtKB-UniRule"/>
</dbReference>
<dbReference type="CDD" id="cd00770">
    <property type="entry name" value="SerRS_core"/>
    <property type="match status" value="1"/>
</dbReference>
<dbReference type="FunFam" id="1.10.287.40:FF:000001">
    <property type="entry name" value="Serine--tRNA ligase"/>
    <property type="match status" value="1"/>
</dbReference>
<dbReference type="FunFam" id="3.30.930.10:FF:000018">
    <property type="entry name" value="Serine--tRNA ligase"/>
    <property type="match status" value="1"/>
</dbReference>
<dbReference type="Gene3D" id="3.30.930.10">
    <property type="entry name" value="Bira Bifunctional Protein, Domain 2"/>
    <property type="match status" value="1"/>
</dbReference>
<dbReference type="Gene3D" id="1.10.287.40">
    <property type="entry name" value="Serine-tRNA synthetase, tRNA binding domain"/>
    <property type="match status" value="1"/>
</dbReference>
<dbReference type="HAMAP" id="MF_00176">
    <property type="entry name" value="Ser_tRNA_synth_type1"/>
    <property type="match status" value="1"/>
</dbReference>
<dbReference type="InterPro" id="IPR002314">
    <property type="entry name" value="aa-tRNA-synt_IIb"/>
</dbReference>
<dbReference type="InterPro" id="IPR006195">
    <property type="entry name" value="aa-tRNA-synth_II"/>
</dbReference>
<dbReference type="InterPro" id="IPR045864">
    <property type="entry name" value="aa-tRNA-synth_II/BPL/LPL"/>
</dbReference>
<dbReference type="InterPro" id="IPR002317">
    <property type="entry name" value="Ser-tRNA-ligase_type_1"/>
</dbReference>
<dbReference type="InterPro" id="IPR015866">
    <property type="entry name" value="Ser-tRNA-synth_1_N"/>
</dbReference>
<dbReference type="InterPro" id="IPR042103">
    <property type="entry name" value="SerRS_1_N_sf"/>
</dbReference>
<dbReference type="InterPro" id="IPR033729">
    <property type="entry name" value="SerRS_core"/>
</dbReference>
<dbReference type="InterPro" id="IPR010978">
    <property type="entry name" value="tRNA-bd_arm"/>
</dbReference>
<dbReference type="NCBIfam" id="TIGR00414">
    <property type="entry name" value="serS"/>
    <property type="match status" value="1"/>
</dbReference>
<dbReference type="PANTHER" id="PTHR43697:SF1">
    <property type="entry name" value="SERINE--TRNA LIGASE"/>
    <property type="match status" value="1"/>
</dbReference>
<dbReference type="PANTHER" id="PTHR43697">
    <property type="entry name" value="SERYL-TRNA SYNTHETASE"/>
    <property type="match status" value="1"/>
</dbReference>
<dbReference type="Pfam" id="PF02403">
    <property type="entry name" value="Seryl_tRNA_N"/>
    <property type="match status" value="1"/>
</dbReference>
<dbReference type="Pfam" id="PF00587">
    <property type="entry name" value="tRNA-synt_2b"/>
    <property type="match status" value="1"/>
</dbReference>
<dbReference type="PIRSF" id="PIRSF001529">
    <property type="entry name" value="Ser-tRNA-synth_IIa"/>
    <property type="match status" value="1"/>
</dbReference>
<dbReference type="PRINTS" id="PR00981">
    <property type="entry name" value="TRNASYNTHSER"/>
</dbReference>
<dbReference type="SUPFAM" id="SSF55681">
    <property type="entry name" value="Class II aaRS and biotin synthetases"/>
    <property type="match status" value="1"/>
</dbReference>
<dbReference type="SUPFAM" id="SSF46589">
    <property type="entry name" value="tRNA-binding arm"/>
    <property type="match status" value="1"/>
</dbReference>
<dbReference type="PROSITE" id="PS50862">
    <property type="entry name" value="AA_TRNA_LIGASE_II"/>
    <property type="match status" value="1"/>
</dbReference>
<feature type="chain" id="PRO_1000199480" description="Serine--tRNA ligase">
    <location>
        <begin position="1"/>
        <end position="430"/>
    </location>
</feature>
<feature type="binding site" evidence="1">
    <location>
        <begin position="237"/>
        <end position="239"/>
    </location>
    <ligand>
        <name>L-serine</name>
        <dbReference type="ChEBI" id="CHEBI:33384"/>
    </ligand>
</feature>
<feature type="binding site" evidence="1">
    <location>
        <begin position="268"/>
        <end position="270"/>
    </location>
    <ligand>
        <name>ATP</name>
        <dbReference type="ChEBI" id="CHEBI:30616"/>
    </ligand>
</feature>
<feature type="binding site" evidence="1">
    <location>
        <position position="291"/>
    </location>
    <ligand>
        <name>L-serine</name>
        <dbReference type="ChEBI" id="CHEBI:33384"/>
    </ligand>
</feature>
<feature type="binding site" evidence="1">
    <location>
        <begin position="355"/>
        <end position="358"/>
    </location>
    <ligand>
        <name>ATP</name>
        <dbReference type="ChEBI" id="CHEBI:30616"/>
    </ligand>
</feature>
<feature type="binding site" evidence="1">
    <location>
        <position position="391"/>
    </location>
    <ligand>
        <name>L-serine</name>
        <dbReference type="ChEBI" id="CHEBI:33384"/>
    </ligand>
</feature>